<accession>A6U856</accession>
<organism>
    <name type="scientific">Sinorhizobium medicae (strain WSM419)</name>
    <name type="common">Ensifer medicae</name>
    <dbReference type="NCBI Taxonomy" id="366394"/>
    <lineage>
        <taxon>Bacteria</taxon>
        <taxon>Pseudomonadati</taxon>
        <taxon>Pseudomonadota</taxon>
        <taxon>Alphaproteobacteria</taxon>
        <taxon>Hyphomicrobiales</taxon>
        <taxon>Rhizobiaceae</taxon>
        <taxon>Sinorhizobium/Ensifer group</taxon>
        <taxon>Sinorhizobium</taxon>
    </lineage>
</organism>
<proteinExistence type="inferred from homology"/>
<reference key="1">
    <citation type="submission" date="2007-06" db="EMBL/GenBank/DDBJ databases">
        <title>Complete sequence of Sinorhizobium medicae WSM419 chromosome.</title>
        <authorList>
            <consortium name="US DOE Joint Genome Institute"/>
            <person name="Copeland A."/>
            <person name="Lucas S."/>
            <person name="Lapidus A."/>
            <person name="Barry K."/>
            <person name="Glavina del Rio T."/>
            <person name="Dalin E."/>
            <person name="Tice H."/>
            <person name="Pitluck S."/>
            <person name="Chain P."/>
            <person name="Malfatti S."/>
            <person name="Shin M."/>
            <person name="Vergez L."/>
            <person name="Schmutz J."/>
            <person name="Larimer F."/>
            <person name="Land M."/>
            <person name="Hauser L."/>
            <person name="Kyrpides N."/>
            <person name="Mikhailova N."/>
            <person name="Reeve W.G."/>
            <person name="Richardson P."/>
        </authorList>
    </citation>
    <scope>NUCLEOTIDE SEQUENCE [LARGE SCALE GENOMIC DNA]</scope>
    <source>
        <strain>WSM419</strain>
    </source>
</reference>
<dbReference type="EMBL" id="CP000738">
    <property type="protein sequence ID" value="ABR59836.1"/>
    <property type="molecule type" value="Genomic_DNA"/>
</dbReference>
<dbReference type="RefSeq" id="WP_011975170.1">
    <property type="nucleotide sequence ID" value="NC_009636.1"/>
</dbReference>
<dbReference type="RefSeq" id="YP_001326671.1">
    <property type="nucleotide sequence ID" value="NC_009636.1"/>
</dbReference>
<dbReference type="SMR" id="A6U856"/>
<dbReference type="STRING" id="366394.Smed_0983"/>
<dbReference type="GeneID" id="61614973"/>
<dbReference type="KEGG" id="smd:Smed_0983"/>
<dbReference type="PATRIC" id="fig|366394.8.peg.4104"/>
<dbReference type="eggNOG" id="COG0480">
    <property type="taxonomic scope" value="Bacteria"/>
</dbReference>
<dbReference type="HOGENOM" id="CLU_002794_4_1_5"/>
<dbReference type="OrthoDB" id="9802948at2"/>
<dbReference type="Proteomes" id="UP000001108">
    <property type="component" value="Chromosome"/>
</dbReference>
<dbReference type="GO" id="GO:0005737">
    <property type="term" value="C:cytoplasm"/>
    <property type="evidence" value="ECO:0007669"/>
    <property type="project" value="UniProtKB-SubCell"/>
</dbReference>
<dbReference type="GO" id="GO:0005525">
    <property type="term" value="F:GTP binding"/>
    <property type="evidence" value="ECO:0007669"/>
    <property type="project" value="UniProtKB-UniRule"/>
</dbReference>
<dbReference type="GO" id="GO:0003924">
    <property type="term" value="F:GTPase activity"/>
    <property type="evidence" value="ECO:0007669"/>
    <property type="project" value="InterPro"/>
</dbReference>
<dbReference type="GO" id="GO:0003746">
    <property type="term" value="F:translation elongation factor activity"/>
    <property type="evidence" value="ECO:0007669"/>
    <property type="project" value="UniProtKB-UniRule"/>
</dbReference>
<dbReference type="GO" id="GO:0032790">
    <property type="term" value="P:ribosome disassembly"/>
    <property type="evidence" value="ECO:0007669"/>
    <property type="project" value="TreeGrafter"/>
</dbReference>
<dbReference type="CDD" id="cd01886">
    <property type="entry name" value="EF-G"/>
    <property type="match status" value="1"/>
</dbReference>
<dbReference type="CDD" id="cd16262">
    <property type="entry name" value="EFG_III"/>
    <property type="match status" value="1"/>
</dbReference>
<dbReference type="CDD" id="cd01434">
    <property type="entry name" value="EFG_mtEFG1_IV"/>
    <property type="match status" value="1"/>
</dbReference>
<dbReference type="CDD" id="cd03713">
    <property type="entry name" value="EFG_mtEFG_C"/>
    <property type="match status" value="1"/>
</dbReference>
<dbReference type="CDD" id="cd04088">
    <property type="entry name" value="EFG_mtEFG_II"/>
    <property type="match status" value="1"/>
</dbReference>
<dbReference type="FunFam" id="2.40.30.10:FF:000006">
    <property type="entry name" value="Elongation factor G"/>
    <property type="match status" value="1"/>
</dbReference>
<dbReference type="FunFam" id="3.30.230.10:FF:000003">
    <property type="entry name" value="Elongation factor G"/>
    <property type="match status" value="1"/>
</dbReference>
<dbReference type="FunFam" id="3.30.70.240:FF:000001">
    <property type="entry name" value="Elongation factor G"/>
    <property type="match status" value="1"/>
</dbReference>
<dbReference type="FunFam" id="3.30.70.870:FF:000001">
    <property type="entry name" value="Elongation factor G"/>
    <property type="match status" value="1"/>
</dbReference>
<dbReference type="FunFam" id="3.40.50.300:FF:000029">
    <property type="entry name" value="Elongation factor G"/>
    <property type="match status" value="1"/>
</dbReference>
<dbReference type="Gene3D" id="3.30.230.10">
    <property type="match status" value="1"/>
</dbReference>
<dbReference type="Gene3D" id="3.30.70.240">
    <property type="match status" value="1"/>
</dbReference>
<dbReference type="Gene3D" id="3.30.70.870">
    <property type="entry name" value="Elongation Factor G (Translational Gtpase), domain 3"/>
    <property type="match status" value="1"/>
</dbReference>
<dbReference type="Gene3D" id="3.40.50.300">
    <property type="entry name" value="P-loop containing nucleotide triphosphate hydrolases"/>
    <property type="match status" value="1"/>
</dbReference>
<dbReference type="Gene3D" id="2.40.30.10">
    <property type="entry name" value="Translation factors"/>
    <property type="match status" value="1"/>
</dbReference>
<dbReference type="HAMAP" id="MF_00054_B">
    <property type="entry name" value="EF_G_EF_2_B"/>
    <property type="match status" value="1"/>
</dbReference>
<dbReference type="InterPro" id="IPR053905">
    <property type="entry name" value="EF-G-like_DII"/>
</dbReference>
<dbReference type="InterPro" id="IPR041095">
    <property type="entry name" value="EFG_II"/>
</dbReference>
<dbReference type="InterPro" id="IPR009022">
    <property type="entry name" value="EFG_III"/>
</dbReference>
<dbReference type="InterPro" id="IPR035647">
    <property type="entry name" value="EFG_III/V"/>
</dbReference>
<dbReference type="InterPro" id="IPR047872">
    <property type="entry name" value="EFG_IV"/>
</dbReference>
<dbReference type="InterPro" id="IPR035649">
    <property type="entry name" value="EFG_V"/>
</dbReference>
<dbReference type="InterPro" id="IPR000640">
    <property type="entry name" value="EFG_V-like"/>
</dbReference>
<dbReference type="InterPro" id="IPR031157">
    <property type="entry name" value="G_TR_CS"/>
</dbReference>
<dbReference type="InterPro" id="IPR027417">
    <property type="entry name" value="P-loop_NTPase"/>
</dbReference>
<dbReference type="InterPro" id="IPR020568">
    <property type="entry name" value="Ribosomal_Su5_D2-typ_SF"/>
</dbReference>
<dbReference type="InterPro" id="IPR014721">
    <property type="entry name" value="Ribsml_uS5_D2-typ_fold_subgr"/>
</dbReference>
<dbReference type="InterPro" id="IPR005225">
    <property type="entry name" value="Small_GTP-bd"/>
</dbReference>
<dbReference type="InterPro" id="IPR000795">
    <property type="entry name" value="T_Tr_GTP-bd_dom"/>
</dbReference>
<dbReference type="InterPro" id="IPR009000">
    <property type="entry name" value="Transl_B-barrel_sf"/>
</dbReference>
<dbReference type="InterPro" id="IPR004540">
    <property type="entry name" value="Transl_elong_EFG/EF2"/>
</dbReference>
<dbReference type="InterPro" id="IPR005517">
    <property type="entry name" value="Transl_elong_EFG/EF2_IV"/>
</dbReference>
<dbReference type="NCBIfam" id="TIGR00484">
    <property type="entry name" value="EF-G"/>
    <property type="match status" value="1"/>
</dbReference>
<dbReference type="NCBIfam" id="NF009381">
    <property type="entry name" value="PRK12740.1-5"/>
    <property type="match status" value="1"/>
</dbReference>
<dbReference type="NCBIfam" id="TIGR00231">
    <property type="entry name" value="small_GTP"/>
    <property type="match status" value="1"/>
</dbReference>
<dbReference type="PANTHER" id="PTHR43261:SF1">
    <property type="entry name" value="RIBOSOME-RELEASING FACTOR 2, MITOCHONDRIAL"/>
    <property type="match status" value="1"/>
</dbReference>
<dbReference type="PANTHER" id="PTHR43261">
    <property type="entry name" value="TRANSLATION ELONGATION FACTOR G-RELATED"/>
    <property type="match status" value="1"/>
</dbReference>
<dbReference type="Pfam" id="PF22042">
    <property type="entry name" value="EF-G_D2"/>
    <property type="match status" value="1"/>
</dbReference>
<dbReference type="Pfam" id="PF00679">
    <property type="entry name" value="EFG_C"/>
    <property type="match status" value="1"/>
</dbReference>
<dbReference type="Pfam" id="PF14492">
    <property type="entry name" value="EFG_III"/>
    <property type="match status" value="1"/>
</dbReference>
<dbReference type="Pfam" id="PF03764">
    <property type="entry name" value="EFG_IV"/>
    <property type="match status" value="1"/>
</dbReference>
<dbReference type="Pfam" id="PF00009">
    <property type="entry name" value="GTP_EFTU"/>
    <property type="match status" value="1"/>
</dbReference>
<dbReference type="PRINTS" id="PR00315">
    <property type="entry name" value="ELONGATNFCT"/>
</dbReference>
<dbReference type="SMART" id="SM00838">
    <property type="entry name" value="EFG_C"/>
    <property type="match status" value="1"/>
</dbReference>
<dbReference type="SMART" id="SM00889">
    <property type="entry name" value="EFG_IV"/>
    <property type="match status" value="1"/>
</dbReference>
<dbReference type="SUPFAM" id="SSF54980">
    <property type="entry name" value="EF-G C-terminal domain-like"/>
    <property type="match status" value="2"/>
</dbReference>
<dbReference type="SUPFAM" id="SSF52540">
    <property type="entry name" value="P-loop containing nucleoside triphosphate hydrolases"/>
    <property type="match status" value="1"/>
</dbReference>
<dbReference type="SUPFAM" id="SSF54211">
    <property type="entry name" value="Ribosomal protein S5 domain 2-like"/>
    <property type="match status" value="1"/>
</dbReference>
<dbReference type="SUPFAM" id="SSF50447">
    <property type="entry name" value="Translation proteins"/>
    <property type="match status" value="1"/>
</dbReference>
<dbReference type="PROSITE" id="PS00301">
    <property type="entry name" value="G_TR_1"/>
    <property type="match status" value="1"/>
</dbReference>
<dbReference type="PROSITE" id="PS51722">
    <property type="entry name" value="G_TR_2"/>
    <property type="match status" value="1"/>
</dbReference>
<name>EFG_SINMW</name>
<comment type="function">
    <text evidence="1">Catalyzes the GTP-dependent ribosomal translocation step during translation elongation. During this step, the ribosome changes from the pre-translocational (PRE) to the post-translocational (POST) state as the newly formed A-site-bound peptidyl-tRNA and P-site-bound deacylated tRNA move to the P and E sites, respectively. Catalyzes the coordinated movement of the two tRNA molecules, the mRNA and conformational changes in the ribosome.</text>
</comment>
<comment type="subcellular location">
    <subcellularLocation>
        <location evidence="1">Cytoplasm</location>
    </subcellularLocation>
</comment>
<comment type="similarity">
    <text evidence="1">Belongs to the TRAFAC class translation factor GTPase superfamily. Classic translation factor GTPase family. EF-G/EF-2 subfamily.</text>
</comment>
<sequence length="699" mass="77890">MAREYKIEDYRNFGIMAHIDAGKTTTTERILYYTGKSHKIGEVHDGAATMDWMEQEQERGITITSAATTTFWKGRDGKSRRFNIIDTPGHVDFTIEVERSLRVLDGAIALLDANAGVEPQTETVWRQAEKYNVPRMIFCNKMDKTGADFYRSVEMIKTRLGATAVVMQLPIGAESDFKGVVDLIEMNALIWRDESLGAQWDVVEIPDDLKEKAEEYREKLIETVVEIDEAAMEAYLEGQYPDNEQIRALVRRGTIDVKFHPMFCGTAFKNKGVQPLLDAVVDYLPSPVDIPAIKGIDVKTEAEIERHASDEEPLSMLAFKIMNDPFVGSLTFARIYSGKLEKGTSVMNTVKEKRERVGRMLQMHSNSREDIEEAFAGDIVALAGLKETTTGDTLCDPLKQVILERMEFPEPVIQIAIEPKTKGDQEKMGLALNRLAAEDPSFRVKTDEESGQTIIAGMGELHLDILVDRMRREFKVEATVGAPQVAYRETITRQHEEDYTHKKQSGGTGQFARVKIVFEPNPEGEEFKFESKIVGGAVPKEYIPGVQKGIESVLSSGPLAGFPMLGVKATLIDGAFHDVDSSVLAFEIASRACFREAAKKAGAQLLEPIMKVEVVTPEDYVGDVIGDLNSRRGQIQGQEARGVAVVINAHVPLANMFKYVDNLRSMSQGRAQYTMLFDHYAPVPSNVAQEIQAKYSGQK</sequence>
<keyword id="KW-0963">Cytoplasm</keyword>
<keyword id="KW-0251">Elongation factor</keyword>
<keyword id="KW-0342">GTP-binding</keyword>
<keyword id="KW-0547">Nucleotide-binding</keyword>
<keyword id="KW-0648">Protein biosynthesis</keyword>
<feature type="chain" id="PRO_1000008882" description="Elongation factor G">
    <location>
        <begin position="1"/>
        <end position="699"/>
    </location>
</feature>
<feature type="domain" description="tr-type G">
    <location>
        <begin position="8"/>
        <end position="288"/>
    </location>
</feature>
<feature type="binding site" evidence="1">
    <location>
        <begin position="17"/>
        <end position="24"/>
    </location>
    <ligand>
        <name>GTP</name>
        <dbReference type="ChEBI" id="CHEBI:37565"/>
    </ligand>
</feature>
<feature type="binding site" evidence="1">
    <location>
        <begin position="86"/>
        <end position="90"/>
    </location>
    <ligand>
        <name>GTP</name>
        <dbReference type="ChEBI" id="CHEBI:37565"/>
    </ligand>
</feature>
<feature type="binding site" evidence="1">
    <location>
        <begin position="140"/>
        <end position="143"/>
    </location>
    <ligand>
        <name>GTP</name>
        <dbReference type="ChEBI" id="CHEBI:37565"/>
    </ligand>
</feature>
<gene>
    <name evidence="1" type="primary">fusA</name>
    <name type="ordered locus">Smed_0983</name>
</gene>
<evidence type="ECO:0000255" key="1">
    <source>
        <dbReference type="HAMAP-Rule" id="MF_00054"/>
    </source>
</evidence>
<protein>
    <recommendedName>
        <fullName evidence="1">Elongation factor G</fullName>
        <shortName evidence="1">EF-G</shortName>
    </recommendedName>
</protein>